<keyword id="KW-1003">Cell membrane</keyword>
<keyword id="KW-1015">Disulfide bond</keyword>
<keyword id="KW-0297">G-protein coupled receptor</keyword>
<keyword id="KW-0325">Glycoprotein</keyword>
<keyword id="KW-0472">Membrane</keyword>
<keyword id="KW-0675">Receptor</keyword>
<keyword id="KW-1185">Reference proteome</keyword>
<keyword id="KW-0732">Signal</keyword>
<keyword id="KW-0807">Transducer</keyword>
<keyword id="KW-0812">Transmembrane</keyword>
<keyword id="KW-1133">Transmembrane helix</keyword>
<comment type="function">
    <text evidence="1 4">Receptor activated by multiple ligands, including osteocalcin (BGLAP), basic amino acids, and various cations (By similarity). Activated by amino acids with a preference for basic amino acids such as L-Lys, L-Arg and L-ornithine but also by small and polar amino acids (PubMed:17478059). The L-alpha amino acids respond is augmented by divalent cations Ca(2+) and Mg(2+) (By similarity). Seems to act through a G(q)/G(11) and G(i)-coupled pathway (By similarity). Regulates testosterone production by acting as a ligand for uncarboxylated osteocalcin hormone: osteocalcin-binding at the surface of Leydig cells initiates a signaling response that promotes the expression of enzymes required for testosterone synthesis in a CREB-dependent manner (By similarity). Mediates the non-genomic effects of androgens in multiple tissue (By similarity). May coordinate nutritional and hormonal anabolic signals through the sensing of extracellular amino acids, osteocalcin, divalent ions and its responsiveness to anabolic steroids (By similarity).</text>
</comment>
<comment type="subunit">
    <text evidence="1">Homodimer; disulfide-linked.</text>
</comment>
<comment type="subcellular location">
    <subcellularLocation>
        <location evidence="4">Cell membrane</location>
        <topology evidence="4">Multi-pass membrane protein</topology>
    </subcellularLocation>
</comment>
<comment type="tissue specificity">
    <text evidence="4">High expression in soft palate. Weak expression in kidney, liver, lung and brain. No expression detected in heart, testis, skeletal muscle amd spleen.</text>
</comment>
<comment type="PTM">
    <text evidence="4">N-glycosylated.</text>
</comment>
<comment type="similarity">
    <text evidence="5">Belongs to the G-protein coupled receptor 3 family.</text>
</comment>
<reference key="1">
    <citation type="journal article" date="2007" name="Gene">
        <title>The rat GPRC6A: cloning and characterization.</title>
        <authorList>
            <person name="Wellendorph P."/>
            <person name="Burhenne N."/>
            <person name="Christiansen B."/>
            <person name="Walter B."/>
            <person name="Schmale H."/>
            <person name="Brauner-Osborne H."/>
        </authorList>
    </citation>
    <scope>NUCLEOTIDE SEQUENCE [MRNA]</scope>
    <scope>FUNCTION</scope>
    <scope>TISSUE SPECIFICITY</scope>
    <scope>SUBCELLULAR LOCATION</scope>
    <scope>GLYCOSYLATION</scope>
    <source>
        <strain>Wistar</strain>
        <tissue>Circumvallate papilla</tissue>
    </source>
</reference>
<sequence length="928" mass="104353">MALSFVFITCFMILLDTSQSCHTPDDFVAITSPGHIMIGGLFAIHEKMLSSDDHPRQPQIQKCVGFEISVFLQTLAMIHSIEMINNSSLLSGVKLGYEIYDTCTEVTAAMAATLRFLSKFNCSRETVIFQCDYSSYVPRVKAIIGAGYSEISMAVSRMLNLQLMPQVSYESTAEILSDKIRFPSFLRTVPSDFYQTKAMAHLIRQSGWNWVGAITTDDDYGRLALNTFAIQAAENNVCIAFKEVLPAFLSDNTIEVRINQTLEKIIAEAQVNVIVVFLRKFHVFNLFNKAIERKISKIWIASDNWSTAAKIITIPNVKKLGKVVGFTFRRGNMSSFHSFLQTLHMYPSDNNKPLHEFAMLFSACKHIKDGDLSQCISNYSQATWTYDTTKTIETHLFKRNDFLWHYTEPGLIHSIQLAVLALGHAIRDLCQDRDCQKPNAFQPWELLAVLKNVTFTDGKNSFHFDAHGDLNTGYEVVLWKETNGLMTVTKMAEYDLQHDVFITTNQETKHEFRKLKQILSKCSKECIPGQMKKATGSQHSCCYECVNCPENHYSNETDMDHCLVCNNETHWAPVRSTMCFEKEVEYLDWDDSLALLLIALSLLGIAFVLAVGIIFTRNLKTPVVKSSGGLVVCYVMLACHALNFASTGFFIGEPQDFTCKTRQTLFGVSFTLCVSCILTKSLKILLAFSFDPTLKTFLKCLYRPVPIVLTCTGIQVVICTLWLVLAAPTVEENTSLPRVIILECEEGSALAFGTMLGYIAVLAFICFVFAFKGRKLPENYNEAKFLTFGMLIYFIAWITFIPVYATTFGKYLPAVEIIVILISNYGILCCTFFPKCYIILCKQKTNTKSVFLQMVYNYSAHSVDSLALSHVSLDSASHSTATTNPRPGNKTAACQNYKHLPVQVLAHTGMEKTMHASKTLHQKRSSSI</sequence>
<protein>
    <recommendedName>
        <fullName>G-protein coupled receptor family C group 6 member A</fullName>
    </recommendedName>
</protein>
<proteinExistence type="evidence at protein level"/>
<name>GPC6A_RAT</name>
<feature type="signal peptide" evidence="2">
    <location>
        <begin position="1"/>
        <end position="20"/>
    </location>
</feature>
<feature type="chain" id="PRO_0000043198" description="G-protein coupled receptor family C group 6 member A">
    <location>
        <begin position="21"/>
        <end position="928"/>
    </location>
</feature>
<feature type="topological domain" description="Extracellular" evidence="2">
    <location>
        <begin position="21"/>
        <end position="594"/>
    </location>
</feature>
<feature type="transmembrane region" description="Helical" evidence="2">
    <location>
        <begin position="595"/>
        <end position="615"/>
    </location>
</feature>
<feature type="topological domain" description="Cytoplasmic" evidence="2">
    <location>
        <begin position="616"/>
        <end position="630"/>
    </location>
</feature>
<feature type="transmembrane region" description="Helical" evidence="2">
    <location>
        <begin position="631"/>
        <end position="651"/>
    </location>
</feature>
<feature type="topological domain" description="Extracellular" evidence="2">
    <location>
        <begin position="652"/>
        <end position="669"/>
    </location>
</feature>
<feature type="transmembrane region" description="Helical" evidence="2">
    <location>
        <begin position="670"/>
        <end position="690"/>
    </location>
</feature>
<feature type="topological domain" description="Cytoplasmic" evidence="2">
    <location>
        <begin position="691"/>
        <end position="706"/>
    </location>
</feature>
<feature type="transmembrane region" description="Helical" evidence="2">
    <location>
        <begin position="707"/>
        <end position="727"/>
    </location>
</feature>
<feature type="topological domain" description="Extracellular" evidence="2">
    <location>
        <begin position="728"/>
        <end position="750"/>
    </location>
</feature>
<feature type="transmembrane region" description="Helical" evidence="2">
    <location>
        <begin position="751"/>
        <end position="771"/>
    </location>
</feature>
<feature type="topological domain" description="Cytoplasmic" evidence="2">
    <location>
        <begin position="772"/>
        <end position="784"/>
    </location>
</feature>
<feature type="transmembrane region" description="Helical" evidence="2">
    <location>
        <begin position="785"/>
        <end position="805"/>
    </location>
</feature>
<feature type="topological domain" description="Extracellular" evidence="2">
    <location>
        <begin position="806"/>
        <end position="812"/>
    </location>
</feature>
<feature type="transmembrane region" description="Helical" evidence="2">
    <location>
        <begin position="813"/>
        <end position="833"/>
    </location>
</feature>
<feature type="topological domain" description="Cytoplasmic" evidence="2">
    <location>
        <begin position="834"/>
        <end position="928"/>
    </location>
</feature>
<feature type="glycosylation site" description="N-linked (GlcNAc...) asparagine" evidence="2">
    <location>
        <position position="332"/>
    </location>
</feature>
<feature type="glycosylation site" description="N-linked (GlcNAc...) asparagine" evidence="2">
    <location>
        <position position="555"/>
    </location>
</feature>
<feature type="disulfide bond" description="Interchain" evidence="3">
    <location>
        <position position="131"/>
    </location>
</feature>
<accession>Q70VB1</accession>
<dbReference type="EMBL" id="AJ535460">
    <property type="protein sequence ID" value="CAD59483.1"/>
    <property type="molecule type" value="mRNA"/>
</dbReference>
<dbReference type="RefSeq" id="NP_001258035.1">
    <property type="nucleotide sequence ID" value="NM_001271106.1"/>
</dbReference>
<dbReference type="SMR" id="Q70VB1"/>
<dbReference type="FunCoup" id="Q70VB1">
    <property type="interactions" value="186"/>
</dbReference>
<dbReference type="MINT" id="Q70VB1"/>
<dbReference type="STRING" id="10116.ENSRNOP00000000451"/>
<dbReference type="GlyCosmos" id="Q70VB1">
    <property type="glycosylation" value="2 sites, No reported glycans"/>
</dbReference>
<dbReference type="GlyGen" id="Q70VB1">
    <property type="glycosylation" value="2 sites"/>
</dbReference>
<dbReference type="PhosphoSitePlus" id="Q70VB1"/>
<dbReference type="PaxDb" id="10116-ENSRNOP00000000451"/>
<dbReference type="Ensembl" id="ENSRNOT00000000451.6">
    <property type="protein sequence ID" value="ENSRNOP00000000451.3"/>
    <property type="gene ID" value="ENSRNOG00000000401.8"/>
</dbReference>
<dbReference type="GeneID" id="294394"/>
<dbReference type="KEGG" id="rno:294394"/>
<dbReference type="UCSC" id="RGD:735077">
    <property type="organism name" value="rat"/>
</dbReference>
<dbReference type="AGR" id="RGD:735077"/>
<dbReference type="CTD" id="222545"/>
<dbReference type="RGD" id="735077">
    <property type="gene designation" value="Gprc6a"/>
</dbReference>
<dbReference type="eggNOG" id="KOG1056">
    <property type="taxonomic scope" value="Eukaryota"/>
</dbReference>
<dbReference type="GeneTree" id="ENSGT00940000158416"/>
<dbReference type="HOGENOM" id="CLU_005389_1_0_1"/>
<dbReference type="InParanoid" id="Q70VB1"/>
<dbReference type="OMA" id="ASPHTCC"/>
<dbReference type="OrthoDB" id="425344at2759"/>
<dbReference type="PhylomeDB" id="Q70VB1"/>
<dbReference type="TreeFam" id="TF331269"/>
<dbReference type="Reactome" id="R-RNO-416476">
    <property type="pathway name" value="G alpha (q) signalling events"/>
</dbReference>
<dbReference type="Reactome" id="R-RNO-420499">
    <property type="pathway name" value="Class C/3 (Metabotropic glutamate/pheromone receptors)"/>
</dbReference>
<dbReference type="PRO" id="PR:Q70VB1"/>
<dbReference type="Proteomes" id="UP000002494">
    <property type="component" value="Chromosome 20"/>
</dbReference>
<dbReference type="GO" id="GO:0009986">
    <property type="term" value="C:cell surface"/>
    <property type="evidence" value="ECO:0007669"/>
    <property type="project" value="Ensembl"/>
</dbReference>
<dbReference type="GO" id="GO:0005886">
    <property type="term" value="C:plasma membrane"/>
    <property type="evidence" value="ECO:0000314"/>
    <property type="project" value="UniProtKB"/>
</dbReference>
<dbReference type="GO" id="GO:0008528">
    <property type="term" value="F:G protein-coupled peptide receptor activity"/>
    <property type="evidence" value="ECO:0000266"/>
    <property type="project" value="RGD"/>
</dbReference>
<dbReference type="GO" id="GO:0004930">
    <property type="term" value="F:G protein-coupled receptor activity"/>
    <property type="evidence" value="ECO:0000250"/>
    <property type="project" value="UniProtKB"/>
</dbReference>
<dbReference type="GO" id="GO:0007189">
    <property type="term" value="P:adenylate cyclase-activating G protein-coupled receptor signaling pathway"/>
    <property type="evidence" value="ECO:0000266"/>
    <property type="project" value="RGD"/>
</dbReference>
<dbReference type="GO" id="GO:0019722">
    <property type="term" value="P:calcium-mediated signaling"/>
    <property type="evidence" value="ECO:0007669"/>
    <property type="project" value="Ensembl"/>
</dbReference>
<dbReference type="GO" id="GO:0035774">
    <property type="term" value="P:positive regulation of insulin secretion involved in cellular response to glucose stimulus"/>
    <property type="evidence" value="ECO:0000266"/>
    <property type="project" value="RGD"/>
</dbReference>
<dbReference type="GO" id="GO:2000224">
    <property type="term" value="P:regulation of testosterone biosynthetic process"/>
    <property type="evidence" value="ECO:0000250"/>
    <property type="project" value="UniProtKB"/>
</dbReference>
<dbReference type="GO" id="GO:0043200">
    <property type="term" value="P:response to amino acid"/>
    <property type="evidence" value="ECO:0000266"/>
    <property type="project" value="RGD"/>
</dbReference>
<dbReference type="CDD" id="cd06361">
    <property type="entry name" value="PBP1_GPC6A-like"/>
    <property type="match status" value="1"/>
</dbReference>
<dbReference type="FunFam" id="3.40.50.2300:FF:000152">
    <property type="entry name" value="G protein-coupled receptor class C group 6 member A"/>
    <property type="match status" value="1"/>
</dbReference>
<dbReference type="FunFam" id="2.10.50.30:FF:000004">
    <property type="entry name" value="Taste receptor type 1 member 3-like protein"/>
    <property type="match status" value="1"/>
</dbReference>
<dbReference type="Gene3D" id="3.40.50.2300">
    <property type="match status" value="2"/>
</dbReference>
<dbReference type="Gene3D" id="2.10.50.30">
    <property type="entry name" value="GPCR, family 3, nine cysteines domain"/>
    <property type="match status" value="1"/>
</dbReference>
<dbReference type="InterPro" id="IPR001828">
    <property type="entry name" value="ANF_lig-bd_rcpt"/>
</dbReference>
<dbReference type="InterPro" id="IPR000337">
    <property type="entry name" value="GPCR_3"/>
</dbReference>
<dbReference type="InterPro" id="IPR011500">
    <property type="entry name" value="GPCR_3_9-Cys_dom"/>
</dbReference>
<dbReference type="InterPro" id="IPR038550">
    <property type="entry name" value="GPCR_3_9-Cys_sf"/>
</dbReference>
<dbReference type="InterPro" id="IPR017978">
    <property type="entry name" value="GPCR_3_C"/>
</dbReference>
<dbReference type="InterPro" id="IPR000068">
    <property type="entry name" value="GPCR_3_Ca_sens_rcpt-rel"/>
</dbReference>
<dbReference type="InterPro" id="IPR017979">
    <property type="entry name" value="GPCR_3_CS"/>
</dbReference>
<dbReference type="InterPro" id="IPR028082">
    <property type="entry name" value="Peripla_BP_I"/>
</dbReference>
<dbReference type="PANTHER" id="PTHR24061">
    <property type="entry name" value="CALCIUM-SENSING RECEPTOR-RELATED"/>
    <property type="match status" value="1"/>
</dbReference>
<dbReference type="PANTHER" id="PTHR24061:SF5">
    <property type="entry name" value="G-PROTEIN COUPLED RECEPTOR FAMILY C GROUP 6 MEMBER A"/>
    <property type="match status" value="1"/>
</dbReference>
<dbReference type="Pfam" id="PF00003">
    <property type="entry name" value="7tm_3"/>
    <property type="match status" value="1"/>
</dbReference>
<dbReference type="Pfam" id="PF01094">
    <property type="entry name" value="ANF_receptor"/>
    <property type="match status" value="1"/>
</dbReference>
<dbReference type="Pfam" id="PF07562">
    <property type="entry name" value="NCD3G"/>
    <property type="match status" value="1"/>
</dbReference>
<dbReference type="PRINTS" id="PR00592">
    <property type="entry name" value="CASENSINGR"/>
</dbReference>
<dbReference type="PRINTS" id="PR00248">
    <property type="entry name" value="GPCRMGR"/>
</dbReference>
<dbReference type="SUPFAM" id="SSF53822">
    <property type="entry name" value="Periplasmic binding protein-like I"/>
    <property type="match status" value="1"/>
</dbReference>
<dbReference type="PROSITE" id="PS00980">
    <property type="entry name" value="G_PROTEIN_RECEP_F3_2"/>
    <property type="match status" value="1"/>
</dbReference>
<dbReference type="PROSITE" id="PS50259">
    <property type="entry name" value="G_PROTEIN_RECEP_F3_4"/>
    <property type="match status" value="1"/>
</dbReference>
<evidence type="ECO:0000250" key="1">
    <source>
        <dbReference type="UniProtKB" id="Q8K4Z6"/>
    </source>
</evidence>
<evidence type="ECO:0000255" key="2"/>
<evidence type="ECO:0000255" key="3">
    <source>
        <dbReference type="PROSITE-ProRule" id="PRU00114"/>
    </source>
</evidence>
<evidence type="ECO:0000269" key="4">
    <source>
    </source>
</evidence>
<evidence type="ECO:0000305" key="5"/>
<gene>
    <name type="primary">Gprc6a</name>
</gene>
<organism>
    <name type="scientific">Rattus norvegicus</name>
    <name type="common">Rat</name>
    <dbReference type="NCBI Taxonomy" id="10116"/>
    <lineage>
        <taxon>Eukaryota</taxon>
        <taxon>Metazoa</taxon>
        <taxon>Chordata</taxon>
        <taxon>Craniata</taxon>
        <taxon>Vertebrata</taxon>
        <taxon>Euteleostomi</taxon>
        <taxon>Mammalia</taxon>
        <taxon>Eutheria</taxon>
        <taxon>Euarchontoglires</taxon>
        <taxon>Glires</taxon>
        <taxon>Rodentia</taxon>
        <taxon>Myomorpha</taxon>
        <taxon>Muroidea</taxon>
        <taxon>Muridae</taxon>
        <taxon>Murinae</taxon>
        <taxon>Rattus</taxon>
    </lineage>
</organism>